<evidence type="ECO:0000255" key="1">
    <source>
        <dbReference type="HAMAP-Rule" id="MF_01281"/>
    </source>
</evidence>
<dbReference type="EC" id="3.5.4.41" evidence="1"/>
<dbReference type="EC" id="3.5.4.31" evidence="1"/>
<dbReference type="EC" id="3.5.4.4" evidence="1"/>
<dbReference type="EC" id="3.5.4.28" evidence="1"/>
<dbReference type="EMBL" id="CP000867">
    <property type="protein sequence ID" value="ABX01996.1"/>
    <property type="molecule type" value="Genomic_DNA"/>
</dbReference>
<dbReference type="SMR" id="A9A9H3"/>
<dbReference type="STRING" id="444158.MmarC6_1183"/>
<dbReference type="KEGG" id="mmx:MmarC6_1183"/>
<dbReference type="eggNOG" id="arCOG00695">
    <property type="taxonomic scope" value="Archaea"/>
</dbReference>
<dbReference type="HOGENOM" id="CLU_012358_2_1_2"/>
<dbReference type="OrthoDB" id="372084at2157"/>
<dbReference type="PhylomeDB" id="A9A9H3"/>
<dbReference type="UniPathway" id="UPA00315"/>
<dbReference type="GO" id="GO:0090613">
    <property type="term" value="F:5'-deoxyadenosine deaminase activity"/>
    <property type="evidence" value="ECO:0007669"/>
    <property type="project" value="UniProtKB-UniRule"/>
</dbReference>
<dbReference type="GO" id="GO:0090614">
    <property type="term" value="F:5'-methylthioadenosine deaminase activity"/>
    <property type="evidence" value="ECO:0007669"/>
    <property type="project" value="UniProtKB-EC"/>
</dbReference>
<dbReference type="GO" id="GO:0004000">
    <property type="term" value="F:adenosine deaminase activity"/>
    <property type="evidence" value="ECO:0007669"/>
    <property type="project" value="UniProtKB-UniRule"/>
</dbReference>
<dbReference type="GO" id="GO:0046872">
    <property type="term" value="F:metal ion binding"/>
    <property type="evidence" value="ECO:0007669"/>
    <property type="project" value="UniProtKB-KW"/>
</dbReference>
<dbReference type="GO" id="GO:0050270">
    <property type="term" value="F:S-adenosylhomocysteine deaminase activity"/>
    <property type="evidence" value="ECO:0007669"/>
    <property type="project" value="UniProtKB-EC"/>
</dbReference>
<dbReference type="GO" id="GO:0006556">
    <property type="term" value="P:S-adenosylmethionine biosynthetic process"/>
    <property type="evidence" value="ECO:0007669"/>
    <property type="project" value="UniProtKB-UniRule"/>
</dbReference>
<dbReference type="CDD" id="cd01298">
    <property type="entry name" value="ATZ_TRZ_like"/>
    <property type="match status" value="1"/>
</dbReference>
<dbReference type="FunFam" id="3.20.20.140:FF:000014">
    <property type="entry name" value="5-methylthioadenosine/S-adenosylhomocysteine deaminase"/>
    <property type="match status" value="1"/>
</dbReference>
<dbReference type="Gene3D" id="3.20.20.140">
    <property type="entry name" value="Metal-dependent hydrolases"/>
    <property type="match status" value="1"/>
</dbReference>
<dbReference type="Gene3D" id="2.30.40.10">
    <property type="entry name" value="Urease, subunit C, domain 1"/>
    <property type="match status" value="1"/>
</dbReference>
<dbReference type="HAMAP" id="MF_01281">
    <property type="entry name" value="MTA_SAH_deamin"/>
    <property type="match status" value="1"/>
</dbReference>
<dbReference type="InterPro" id="IPR006680">
    <property type="entry name" value="Amidohydro-rel"/>
</dbReference>
<dbReference type="InterPro" id="IPR023512">
    <property type="entry name" value="Deaminase_MtaD/DadD"/>
</dbReference>
<dbReference type="InterPro" id="IPR011059">
    <property type="entry name" value="Metal-dep_hydrolase_composite"/>
</dbReference>
<dbReference type="InterPro" id="IPR032466">
    <property type="entry name" value="Metal_Hydrolase"/>
</dbReference>
<dbReference type="InterPro" id="IPR050287">
    <property type="entry name" value="MTA/SAH_deaminase"/>
</dbReference>
<dbReference type="PANTHER" id="PTHR43794:SF11">
    <property type="entry name" value="AMIDOHYDROLASE-RELATED DOMAIN-CONTAINING PROTEIN"/>
    <property type="match status" value="1"/>
</dbReference>
<dbReference type="PANTHER" id="PTHR43794">
    <property type="entry name" value="AMINOHYDROLASE SSNA-RELATED"/>
    <property type="match status" value="1"/>
</dbReference>
<dbReference type="Pfam" id="PF01979">
    <property type="entry name" value="Amidohydro_1"/>
    <property type="match status" value="1"/>
</dbReference>
<dbReference type="SUPFAM" id="SSF51338">
    <property type="entry name" value="Composite domain of metallo-dependent hydrolases"/>
    <property type="match status" value="1"/>
</dbReference>
<dbReference type="SUPFAM" id="SSF51556">
    <property type="entry name" value="Metallo-dependent hydrolases"/>
    <property type="match status" value="1"/>
</dbReference>
<name>DADD_METM6</name>
<accession>A9A9H3</accession>
<comment type="function">
    <text evidence="1">Catalyzes the deamination of three SAM-derived enzymatic products, namely 5'-deoxyadenosine, S-adenosyl-L-homocysteine, and 5'-methylthioadenosine, to produce the inosine analogs. Can also deaminate adenosine. The preferred substrate for this enzyme is 5'-deoxyadenosine, but all these substrates are efficiently deaminated. Likely functions in a S-adenosyl-L-methionine (SAM) recycling pathway from S-adenosyl-L-homocysteine (SAH) produced from SAM-dependent methylation reactions. May also be involved in the recycling of 5'-deoxyadenosine, whereupon the 5'-deoxyribose moiety of 5'-deoxyinosine is further metabolized to deoxyhexoses used for the biosynthesis of aromatic amino acids in methanogens.</text>
</comment>
<comment type="catalytic activity">
    <reaction evidence="1">
        <text>5'-deoxyadenosine + H2O + H(+) = 5'-deoxyinosine + NH4(+)</text>
        <dbReference type="Rhea" id="RHEA:42892"/>
        <dbReference type="ChEBI" id="CHEBI:15377"/>
        <dbReference type="ChEBI" id="CHEBI:15378"/>
        <dbReference type="ChEBI" id="CHEBI:17319"/>
        <dbReference type="ChEBI" id="CHEBI:28938"/>
        <dbReference type="ChEBI" id="CHEBI:82775"/>
        <dbReference type="EC" id="3.5.4.41"/>
    </reaction>
    <physiologicalReaction direction="left-to-right" evidence="1">
        <dbReference type="Rhea" id="RHEA:42893"/>
    </physiologicalReaction>
</comment>
<comment type="catalytic activity">
    <reaction evidence="1">
        <text>S-adenosyl-L-homocysteine + H2O + H(+) = S-inosyl-L-homocysteine + NH4(+)</text>
        <dbReference type="Rhea" id="RHEA:20716"/>
        <dbReference type="ChEBI" id="CHEBI:15377"/>
        <dbReference type="ChEBI" id="CHEBI:15378"/>
        <dbReference type="ChEBI" id="CHEBI:28938"/>
        <dbReference type="ChEBI" id="CHEBI:57856"/>
        <dbReference type="ChEBI" id="CHEBI:57985"/>
        <dbReference type="EC" id="3.5.4.28"/>
    </reaction>
    <physiologicalReaction direction="left-to-right" evidence="1">
        <dbReference type="Rhea" id="RHEA:20717"/>
    </physiologicalReaction>
</comment>
<comment type="catalytic activity">
    <reaction evidence="1">
        <text>S-methyl-5'-thioadenosine + H2O + H(+) = S-methyl-5'-thioinosine + NH4(+)</text>
        <dbReference type="Rhea" id="RHEA:25025"/>
        <dbReference type="ChEBI" id="CHEBI:15377"/>
        <dbReference type="ChEBI" id="CHEBI:15378"/>
        <dbReference type="ChEBI" id="CHEBI:17509"/>
        <dbReference type="ChEBI" id="CHEBI:28938"/>
        <dbReference type="ChEBI" id="CHEBI:48595"/>
        <dbReference type="EC" id="3.5.4.31"/>
    </reaction>
    <physiologicalReaction direction="left-to-right" evidence="1">
        <dbReference type="Rhea" id="RHEA:25026"/>
    </physiologicalReaction>
</comment>
<comment type="catalytic activity">
    <reaction evidence="1">
        <text>adenosine + H2O + H(+) = inosine + NH4(+)</text>
        <dbReference type="Rhea" id="RHEA:24408"/>
        <dbReference type="ChEBI" id="CHEBI:15377"/>
        <dbReference type="ChEBI" id="CHEBI:15378"/>
        <dbReference type="ChEBI" id="CHEBI:16335"/>
        <dbReference type="ChEBI" id="CHEBI:17596"/>
        <dbReference type="ChEBI" id="CHEBI:28938"/>
        <dbReference type="EC" id="3.5.4.4"/>
    </reaction>
    <physiologicalReaction direction="left-to-right" evidence="1">
        <dbReference type="Rhea" id="RHEA:24409"/>
    </physiologicalReaction>
</comment>
<comment type="cofactor">
    <cofactor evidence="1">
        <name>Zn(2+)</name>
        <dbReference type="ChEBI" id="CHEBI:29105"/>
    </cofactor>
    <text evidence="1">Binds 1 zinc ion per subunit.</text>
</comment>
<comment type="pathway">
    <text evidence="1">Amino-acid biosynthesis; S-adenosyl-L-methionine biosynthesis.</text>
</comment>
<comment type="subunit">
    <text evidence="1">Homotetramer.</text>
</comment>
<comment type="miscellaneous">
    <text evidence="1">SAH is a product of SAM methyltransferases and is known to be a feedback inhibitor of these enzymes. As a result of this inhibition, organisms have evolved efficient enzymes to metabolize SAH via different pathways. The pathway found in methanogens differs from the canonical pathway, it uses the deamination of S-adenosyl-L-homocysteine to form S-inosyl-L-homocysteine for the regeneration of SAM from S-adenosyl-L-homocysteine. 5'-deoxyadenosine is a radical SAM enzyme reaction product which strongly inhibits radical SAM enzymes. A pathway for removing this product must be present in methanogens where the MTA/SAH nucleosidase which normally metabolizes this compound is absent.</text>
</comment>
<comment type="similarity">
    <text evidence="1">Belongs to the metallo-dependent hydrolases superfamily. MTA/SAH deaminase family.</text>
</comment>
<reference key="1">
    <citation type="submission" date="2007-10" db="EMBL/GenBank/DDBJ databases">
        <title>Complete sequence of Methanococcus maripaludis C6.</title>
        <authorList>
            <consortium name="US DOE Joint Genome Institute"/>
            <person name="Copeland A."/>
            <person name="Lucas S."/>
            <person name="Lapidus A."/>
            <person name="Barry K."/>
            <person name="Glavina del Rio T."/>
            <person name="Dalin E."/>
            <person name="Tice H."/>
            <person name="Pitluck S."/>
            <person name="Clum A."/>
            <person name="Schmutz J."/>
            <person name="Larimer F."/>
            <person name="Land M."/>
            <person name="Hauser L."/>
            <person name="Kyrpides N."/>
            <person name="Mikhailova N."/>
            <person name="Sieprawska-Lupa M."/>
            <person name="Whitman W.B."/>
            <person name="Richardson P."/>
        </authorList>
    </citation>
    <scope>NUCLEOTIDE SEQUENCE [LARGE SCALE GENOMIC DNA]</scope>
    <source>
        <strain>C6 / ATCC BAA-1332</strain>
    </source>
</reference>
<feature type="chain" id="PRO_1000140352" description="5'-deoxyadenosine deaminase">
    <location>
        <begin position="1"/>
        <end position="422"/>
    </location>
</feature>
<feature type="binding site" evidence="1">
    <location>
        <position position="57"/>
    </location>
    <ligand>
        <name>Zn(2+)</name>
        <dbReference type="ChEBI" id="CHEBI:29105"/>
    </ligand>
</feature>
<feature type="binding site" evidence="1">
    <location>
        <position position="59"/>
    </location>
    <ligand>
        <name>Zn(2+)</name>
        <dbReference type="ChEBI" id="CHEBI:29105"/>
    </ligand>
</feature>
<feature type="binding site" evidence="1">
    <location>
        <position position="86"/>
    </location>
    <ligand>
        <name>substrate</name>
    </ligand>
</feature>
<feature type="binding site" evidence="1">
    <location>
        <position position="178"/>
    </location>
    <ligand>
        <name>substrate</name>
    </ligand>
</feature>
<feature type="binding site" evidence="1">
    <location>
        <position position="205"/>
    </location>
    <ligand>
        <name>Zn(2+)</name>
        <dbReference type="ChEBI" id="CHEBI:29105"/>
    </ligand>
</feature>
<feature type="binding site" evidence="1">
    <location>
        <position position="208"/>
    </location>
    <ligand>
        <name>substrate</name>
    </ligand>
</feature>
<feature type="binding site" evidence="1">
    <location>
        <position position="294"/>
    </location>
    <ligand>
        <name>substrate</name>
    </ligand>
</feature>
<feature type="binding site" evidence="1">
    <location>
        <position position="294"/>
    </location>
    <ligand>
        <name>Zn(2+)</name>
        <dbReference type="ChEBI" id="CHEBI:29105"/>
    </ligand>
</feature>
<gene>
    <name evidence="1" type="primary">dadD</name>
    <name type="ordered locus">MmarC6_1183</name>
</gene>
<proteinExistence type="inferred from homology"/>
<organism>
    <name type="scientific">Methanococcus maripaludis (strain C6 / ATCC BAA-1332)</name>
    <dbReference type="NCBI Taxonomy" id="444158"/>
    <lineage>
        <taxon>Archaea</taxon>
        <taxon>Methanobacteriati</taxon>
        <taxon>Methanobacteriota</taxon>
        <taxon>Methanomada group</taxon>
        <taxon>Methanococci</taxon>
        <taxon>Methanococcales</taxon>
        <taxon>Methanococcaceae</taxon>
        <taxon>Methanococcus</taxon>
    </lineage>
</organism>
<sequence>MILVKDANINGKKQDLLVEGNIIKKIGNISISEVSKDETEIIDGKNCVLIPGLVNTHTHVPMSLFRGVADDIPLMEWLSGHIWPMESKLNEKIVYAGTLLGTIEMIKSGTTAFNDMYFFLDSIIKAVDETGIRSTIAYGMIDLFDEEKREKELKTAKESLEMIKNLNNSRITGALGPHAPYTCSKEILDSTNALAREYNVPIHIHMNETLDEINQVVEKTGIRPFEYLNSFGFFDNVNTICAHCVHLSDSEIQIMKEKNIFVAHNPVSNLKLASGVSPVLKLLENNISVTLGTDGCGSNNNMNLFEEIKAAALIHKGVNLNPVAVTAKEAFEFGTKNGAKALNINSGEIKEGKLADFVLINMKKPYLTPKENIESHLVYSFNGVVDTVVIDGKIVLNDGKMVNIDEEKVYELAEEAYLELAN</sequence>
<keyword id="KW-0378">Hydrolase</keyword>
<keyword id="KW-0479">Metal-binding</keyword>
<keyword id="KW-0862">Zinc</keyword>
<protein>
    <recommendedName>
        <fullName evidence="1">5'-deoxyadenosine deaminase</fullName>
        <shortName evidence="1">5'-dA deaminase</shortName>
        <ecNumber evidence="1">3.5.4.41</ecNumber>
    </recommendedName>
    <alternativeName>
        <fullName evidence="1">5'-methylthioadenosine deaminase</fullName>
        <shortName evidence="1">MTA deaminase</shortName>
        <ecNumber evidence="1">3.5.4.31</ecNumber>
    </alternativeName>
    <alternativeName>
        <fullName evidence="1">Adenosine deaminase</fullName>
        <ecNumber evidence="1">3.5.4.4</ecNumber>
    </alternativeName>
    <alternativeName>
        <fullName evidence="1">S-adenosylhomocysteine deaminase</fullName>
        <shortName evidence="1">SAH deaminase</shortName>
        <ecNumber evidence="1">3.5.4.28</ecNumber>
    </alternativeName>
</protein>